<evidence type="ECO:0000255" key="1">
    <source>
        <dbReference type="HAMAP-Rule" id="MF_01077"/>
    </source>
</evidence>
<name>RIMP_STRPG</name>
<sequence length="178" mass="19717">MDSQGPIILEKSIKIEEVIKIANTSIIDIVTKTVTPEIKAPYELVDVEYDKMGSDYILSILVDKEGGITVEDTSDLTNIISPLLDTIDPDPFPNQYMLEVSSPGLERPLKTADSLKAAVGSYINVSLYQAIDKVKVFQGDLLAFDGETLTIDYLDKTRHKIVNIPYQVVAKVRMAVKL</sequence>
<accession>A2RCZ7</accession>
<keyword id="KW-0963">Cytoplasm</keyword>
<keyword id="KW-0690">Ribosome biogenesis</keyword>
<gene>
    <name evidence="1" type="primary">rimP</name>
    <name type="ordered locus">SpyM50378</name>
</gene>
<protein>
    <recommendedName>
        <fullName evidence="1">Ribosome maturation factor RimP</fullName>
    </recommendedName>
</protein>
<proteinExistence type="inferred from homology"/>
<feature type="chain" id="PRO_1000064785" description="Ribosome maturation factor RimP">
    <location>
        <begin position="1"/>
        <end position="178"/>
    </location>
</feature>
<organism>
    <name type="scientific">Streptococcus pyogenes serotype M5 (strain Manfredo)</name>
    <dbReference type="NCBI Taxonomy" id="160491"/>
    <lineage>
        <taxon>Bacteria</taxon>
        <taxon>Bacillati</taxon>
        <taxon>Bacillota</taxon>
        <taxon>Bacilli</taxon>
        <taxon>Lactobacillales</taxon>
        <taxon>Streptococcaceae</taxon>
        <taxon>Streptococcus</taxon>
    </lineage>
</organism>
<dbReference type="EMBL" id="AM295007">
    <property type="protein sequence ID" value="CAM29720.1"/>
    <property type="molecule type" value="Genomic_DNA"/>
</dbReference>
<dbReference type="RefSeq" id="WP_011888645.1">
    <property type="nucleotide sequence ID" value="NC_009332.1"/>
</dbReference>
<dbReference type="SMR" id="A2RCZ7"/>
<dbReference type="KEGG" id="spf:SpyM50378"/>
<dbReference type="HOGENOM" id="CLU_070525_2_0_9"/>
<dbReference type="GO" id="GO:0005829">
    <property type="term" value="C:cytosol"/>
    <property type="evidence" value="ECO:0007669"/>
    <property type="project" value="TreeGrafter"/>
</dbReference>
<dbReference type="GO" id="GO:0000028">
    <property type="term" value="P:ribosomal small subunit assembly"/>
    <property type="evidence" value="ECO:0007669"/>
    <property type="project" value="TreeGrafter"/>
</dbReference>
<dbReference type="GO" id="GO:0006412">
    <property type="term" value="P:translation"/>
    <property type="evidence" value="ECO:0007669"/>
    <property type="project" value="TreeGrafter"/>
</dbReference>
<dbReference type="CDD" id="cd01734">
    <property type="entry name" value="YlxS_C"/>
    <property type="match status" value="1"/>
</dbReference>
<dbReference type="Gene3D" id="2.30.30.180">
    <property type="entry name" value="Ribosome maturation factor RimP, C-terminal domain"/>
    <property type="match status" value="1"/>
</dbReference>
<dbReference type="Gene3D" id="3.30.300.70">
    <property type="entry name" value="RimP-like superfamily, N-terminal"/>
    <property type="match status" value="1"/>
</dbReference>
<dbReference type="HAMAP" id="MF_01077">
    <property type="entry name" value="RimP"/>
    <property type="match status" value="1"/>
</dbReference>
<dbReference type="InterPro" id="IPR003728">
    <property type="entry name" value="Ribosome_maturation_RimP"/>
</dbReference>
<dbReference type="InterPro" id="IPR028998">
    <property type="entry name" value="RimP_C"/>
</dbReference>
<dbReference type="InterPro" id="IPR036847">
    <property type="entry name" value="RimP_C_sf"/>
</dbReference>
<dbReference type="InterPro" id="IPR028989">
    <property type="entry name" value="RimP_N"/>
</dbReference>
<dbReference type="InterPro" id="IPR035956">
    <property type="entry name" value="RimP_N_sf"/>
</dbReference>
<dbReference type="NCBIfam" id="NF000928">
    <property type="entry name" value="PRK00092.1-2"/>
    <property type="match status" value="1"/>
</dbReference>
<dbReference type="PANTHER" id="PTHR33867">
    <property type="entry name" value="RIBOSOME MATURATION FACTOR RIMP"/>
    <property type="match status" value="1"/>
</dbReference>
<dbReference type="PANTHER" id="PTHR33867:SF1">
    <property type="entry name" value="RIBOSOME MATURATION FACTOR RIMP"/>
    <property type="match status" value="1"/>
</dbReference>
<dbReference type="Pfam" id="PF17384">
    <property type="entry name" value="DUF150_C"/>
    <property type="match status" value="1"/>
</dbReference>
<dbReference type="Pfam" id="PF02576">
    <property type="entry name" value="RimP_N"/>
    <property type="match status" value="1"/>
</dbReference>
<dbReference type="SUPFAM" id="SSF74942">
    <property type="entry name" value="YhbC-like, C-terminal domain"/>
    <property type="match status" value="1"/>
</dbReference>
<dbReference type="SUPFAM" id="SSF75420">
    <property type="entry name" value="YhbC-like, N-terminal domain"/>
    <property type="match status" value="1"/>
</dbReference>
<comment type="function">
    <text evidence="1">Required for maturation of 30S ribosomal subunits.</text>
</comment>
<comment type="subcellular location">
    <subcellularLocation>
        <location evidence="1">Cytoplasm</location>
    </subcellularLocation>
</comment>
<comment type="similarity">
    <text evidence="1">Belongs to the RimP family.</text>
</comment>
<reference key="1">
    <citation type="journal article" date="2007" name="J. Bacteriol.">
        <title>Complete genome of acute rheumatic fever-associated serotype M5 Streptococcus pyogenes strain Manfredo.</title>
        <authorList>
            <person name="Holden M.T.G."/>
            <person name="Scott A."/>
            <person name="Cherevach I."/>
            <person name="Chillingworth T."/>
            <person name="Churcher C."/>
            <person name="Cronin A."/>
            <person name="Dowd L."/>
            <person name="Feltwell T."/>
            <person name="Hamlin N."/>
            <person name="Holroyd S."/>
            <person name="Jagels K."/>
            <person name="Moule S."/>
            <person name="Mungall K."/>
            <person name="Quail M.A."/>
            <person name="Price C."/>
            <person name="Rabbinowitsch E."/>
            <person name="Sharp S."/>
            <person name="Skelton J."/>
            <person name="Whitehead S."/>
            <person name="Barrell B.G."/>
            <person name="Kehoe M."/>
            <person name="Parkhill J."/>
        </authorList>
    </citation>
    <scope>NUCLEOTIDE SEQUENCE [LARGE SCALE GENOMIC DNA]</scope>
    <source>
        <strain>Manfredo</strain>
    </source>
</reference>